<accession>C4JV00</accession>
<name>MDM10_UNCRE</name>
<feature type="chain" id="PRO_0000384203" description="Mitochondrial distribution and morphology protein 10">
    <location>
        <begin position="1"/>
        <end position="452"/>
    </location>
</feature>
<feature type="region of interest" description="Disordered" evidence="2">
    <location>
        <begin position="105"/>
        <end position="130"/>
    </location>
</feature>
<organism>
    <name type="scientific">Uncinocarpus reesii (strain UAMH 1704)</name>
    <dbReference type="NCBI Taxonomy" id="336963"/>
    <lineage>
        <taxon>Eukaryota</taxon>
        <taxon>Fungi</taxon>
        <taxon>Dikarya</taxon>
        <taxon>Ascomycota</taxon>
        <taxon>Pezizomycotina</taxon>
        <taxon>Eurotiomycetes</taxon>
        <taxon>Eurotiomycetidae</taxon>
        <taxon>Onygenales</taxon>
        <taxon>Onygenaceae</taxon>
        <taxon>Uncinocarpus</taxon>
    </lineage>
</organism>
<dbReference type="EMBL" id="CH476617">
    <property type="protein sequence ID" value="EEP80111.1"/>
    <property type="molecule type" value="Genomic_DNA"/>
</dbReference>
<dbReference type="RefSeq" id="XP_002584264.1">
    <property type="nucleotide sequence ID" value="XM_002584218.1"/>
</dbReference>
<dbReference type="SMR" id="C4JV00"/>
<dbReference type="FunCoup" id="C4JV00">
    <property type="interactions" value="49"/>
</dbReference>
<dbReference type="STRING" id="336963.C4JV00"/>
<dbReference type="GeneID" id="8438007"/>
<dbReference type="KEGG" id="ure:UREG_04953"/>
<dbReference type="VEuPathDB" id="FungiDB:UREG_04953"/>
<dbReference type="eggNOG" id="ENOG502QUN5">
    <property type="taxonomic scope" value="Eukaryota"/>
</dbReference>
<dbReference type="HOGENOM" id="CLU_026505_1_0_1"/>
<dbReference type="InParanoid" id="C4JV00"/>
<dbReference type="OMA" id="VPGYRQI"/>
<dbReference type="OrthoDB" id="2103793at2759"/>
<dbReference type="Proteomes" id="UP000002058">
    <property type="component" value="Unassembled WGS sequence"/>
</dbReference>
<dbReference type="GO" id="GO:0032865">
    <property type="term" value="C:ERMES complex"/>
    <property type="evidence" value="ECO:0007669"/>
    <property type="project" value="UniProtKB-UniRule"/>
</dbReference>
<dbReference type="GO" id="GO:0001401">
    <property type="term" value="C:SAM complex"/>
    <property type="evidence" value="ECO:0007669"/>
    <property type="project" value="TreeGrafter"/>
</dbReference>
<dbReference type="GO" id="GO:0051654">
    <property type="term" value="P:establishment of mitochondrion localization"/>
    <property type="evidence" value="ECO:0007669"/>
    <property type="project" value="TreeGrafter"/>
</dbReference>
<dbReference type="GO" id="GO:0000002">
    <property type="term" value="P:mitochondrial genome maintenance"/>
    <property type="evidence" value="ECO:0007669"/>
    <property type="project" value="UniProtKB-UniRule"/>
</dbReference>
<dbReference type="GO" id="GO:0070096">
    <property type="term" value="P:mitochondrial outer membrane translocase complex assembly"/>
    <property type="evidence" value="ECO:0007669"/>
    <property type="project" value="UniProtKB-UniRule"/>
</dbReference>
<dbReference type="GO" id="GO:1990456">
    <property type="term" value="P:mitochondrion-endoplasmic reticulum membrane tethering"/>
    <property type="evidence" value="ECO:0007669"/>
    <property type="project" value="UniProtKB-UniRule"/>
</dbReference>
<dbReference type="GO" id="GO:0015914">
    <property type="term" value="P:phospholipid transport"/>
    <property type="evidence" value="ECO:0007669"/>
    <property type="project" value="TreeGrafter"/>
</dbReference>
<dbReference type="GO" id="GO:0045040">
    <property type="term" value="P:protein insertion into mitochondrial outer membrane"/>
    <property type="evidence" value="ECO:0007669"/>
    <property type="project" value="UniProtKB-UniRule"/>
</dbReference>
<dbReference type="HAMAP" id="MF_03102">
    <property type="entry name" value="Mdm10"/>
    <property type="match status" value="1"/>
</dbReference>
<dbReference type="InterPro" id="IPR027539">
    <property type="entry name" value="Mdm10"/>
</dbReference>
<dbReference type="PANTHER" id="PTHR28035">
    <property type="entry name" value="MITOCHONDRIAL DISTRIBUTION AND MORPHOLOGY PROTEIN 10"/>
    <property type="match status" value="1"/>
</dbReference>
<dbReference type="PANTHER" id="PTHR28035:SF1">
    <property type="entry name" value="MITOCHONDRIAL DISTRIBUTION AND MORPHOLOGY PROTEIN 10"/>
    <property type="match status" value="1"/>
</dbReference>
<dbReference type="Pfam" id="PF12519">
    <property type="entry name" value="MDM10"/>
    <property type="match status" value="2"/>
</dbReference>
<keyword id="KW-0472">Membrane</keyword>
<keyword id="KW-0496">Mitochondrion</keyword>
<keyword id="KW-1000">Mitochondrion outer membrane</keyword>
<keyword id="KW-1185">Reference proteome</keyword>
<keyword id="KW-0812">Transmembrane</keyword>
<keyword id="KW-1134">Transmembrane beta strand</keyword>
<proteinExistence type="inferred from homology"/>
<protein>
    <recommendedName>
        <fullName evidence="1">Mitochondrial distribution and morphology protein 10</fullName>
    </recommendedName>
    <alternativeName>
        <fullName evidence="1">Mitochondrial inheritance component MDM10</fullName>
    </alternativeName>
</protein>
<sequence>MIDFIDYIQLSFSDATRWNRDNSYTALTDTANALLDFSIPERLRVHLSSLSTPQFATTYTLGTVGLIDGSISYLFSTLPLQTTQSRSTLIPLRKLVPGYRQIHPPLAPESWDSDGPGHEGSDGQEDETTPWKRRRETLLHAILHLPPPTTLNGLFLRRLSPTTQLSVAVCSTQAKPLSKSTPQASILTQLSHDTGKYSAEFLFSTDNALLGFKGLYNFGPDPRDRTNAQRPQRASQSVSLLSAGGEMYYSPLSSVVGLSTGLRFTTLPAASETLHSPSSSAYPAPSPISTFPYTLTLTLTPLTGSLSTTYSLLASPNLAFSSRFGFNVYSWESEMVAGCELWRQKRKPYPYVSGEKDDLAWAKRKMGLLPPLPAPPTPAKRMDLTAGAGESVESDSVIKLRVDQSLNIRLLWEGRVKDLLVSAGVGLGPTSLSTGGAAYGWTGVGVSVLYST</sequence>
<gene>
    <name evidence="1" type="primary">MDM10</name>
    <name type="ORF">UREG_04953</name>
</gene>
<evidence type="ECO:0000255" key="1">
    <source>
        <dbReference type="HAMAP-Rule" id="MF_03102"/>
    </source>
</evidence>
<evidence type="ECO:0000256" key="2">
    <source>
        <dbReference type="SAM" id="MobiDB-lite"/>
    </source>
</evidence>
<reference key="1">
    <citation type="journal article" date="2009" name="Genome Res.">
        <title>Comparative genomic analyses of the human fungal pathogens Coccidioides and their relatives.</title>
        <authorList>
            <person name="Sharpton T.J."/>
            <person name="Stajich J.E."/>
            <person name="Rounsley S.D."/>
            <person name="Gardner M.J."/>
            <person name="Wortman J.R."/>
            <person name="Jordar V.S."/>
            <person name="Maiti R."/>
            <person name="Kodira C.D."/>
            <person name="Neafsey D.E."/>
            <person name="Zeng Q."/>
            <person name="Hung C.-Y."/>
            <person name="McMahan C."/>
            <person name="Muszewska A."/>
            <person name="Grynberg M."/>
            <person name="Mandel M.A."/>
            <person name="Kellner E.M."/>
            <person name="Barker B.M."/>
            <person name="Galgiani J.N."/>
            <person name="Orbach M.J."/>
            <person name="Kirkland T.N."/>
            <person name="Cole G.T."/>
            <person name="Henn M.R."/>
            <person name="Birren B.W."/>
            <person name="Taylor J.W."/>
        </authorList>
    </citation>
    <scope>NUCLEOTIDE SEQUENCE [LARGE SCALE GENOMIC DNA]</scope>
    <source>
        <strain>UAMH 1704</strain>
    </source>
</reference>
<comment type="function">
    <text evidence="1">Component of the ERMES/MDM complex, which serves as a molecular tether to connect the endoplasmic reticulum and mitochondria. Components of this complex are involved in the control of mitochondrial shape and protein biogenesis and may function in phospholipid exchange. MDM10 is involved in the late assembly steps of the general translocase of the mitochondrial outer membrane (TOM complex). Functions in the TOM40-specific route of the assembly of outer membrane beta-barrel proteins, including the association of TOM40 with the receptor TOM22 and small TOM proteins. Can associate with the SAM(core) complex as well as the MDM12-MMM1 complex, both involved in late steps of the major beta-barrel assembly pathway, that is responsible for biogenesis of all outer membrane beta-barrel proteins. May act as a switch that shuttles between both complexes and channels precursor proteins into the TOM40-specific pathway. Plays a role in mitochondrial morphology and in the inheritance of mitochondria.</text>
</comment>
<comment type="subunit">
    <text evidence="1">Component of the ER-mitochondria encounter structure (ERMES) or MDM complex, composed of MMM1, MDM10, MDM12 and MDM34. Associates with the mitochondrial outer membrane sorting assembly machinery SAM(core) complex.</text>
</comment>
<comment type="subcellular location">
    <subcellularLocation>
        <location evidence="1">Mitochondrion outer membrane</location>
        <topology evidence="1">Multi-pass membrane protein</topology>
    </subcellularLocation>
    <text evidence="1">The ERMES/MDM complex localizes to a few discrete foci (around 10 per single cell), that represent mitochondria-endoplasmic reticulum junctions. These foci are often found next to mtDNA nucleoids.</text>
</comment>
<comment type="domain">
    <text>Lacks alpha-helical transmembrane segments, suggesting that it resides in the membrane via beta-sheet conformations similar to those predicted for other outer membrane proteins and porin.</text>
</comment>
<comment type="similarity">
    <text evidence="1">Belongs to the MDM10 family.</text>
</comment>